<gene>
    <name evidence="1" type="primary">gcvT</name>
    <name type="ordered locus">Bmul_0143</name>
    <name type="ordered locus">BMULJ_03122</name>
</gene>
<comment type="function">
    <text evidence="1">The glycine cleavage system catalyzes the degradation of glycine.</text>
</comment>
<comment type="catalytic activity">
    <reaction evidence="1">
        <text>N(6)-[(R)-S(8)-aminomethyldihydrolipoyl]-L-lysyl-[protein] + (6S)-5,6,7,8-tetrahydrofolate = N(6)-[(R)-dihydrolipoyl]-L-lysyl-[protein] + (6R)-5,10-methylene-5,6,7,8-tetrahydrofolate + NH4(+)</text>
        <dbReference type="Rhea" id="RHEA:16945"/>
        <dbReference type="Rhea" id="RHEA-COMP:10475"/>
        <dbReference type="Rhea" id="RHEA-COMP:10492"/>
        <dbReference type="ChEBI" id="CHEBI:15636"/>
        <dbReference type="ChEBI" id="CHEBI:28938"/>
        <dbReference type="ChEBI" id="CHEBI:57453"/>
        <dbReference type="ChEBI" id="CHEBI:83100"/>
        <dbReference type="ChEBI" id="CHEBI:83143"/>
        <dbReference type="EC" id="2.1.2.10"/>
    </reaction>
</comment>
<comment type="subunit">
    <text evidence="1">The glycine cleavage system is composed of four proteins: P, T, L and H.</text>
</comment>
<comment type="similarity">
    <text evidence="1">Belongs to the GcvT family.</text>
</comment>
<feature type="chain" id="PRO_1000114083" description="Aminomethyltransferase">
    <location>
        <begin position="1"/>
        <end position="372"/>
    </location>
</feature>
<sequence>MTALKHTPLNAAHRALNARMVDFGGWDMPVNYGSQIEEHEAVRTDAGMFDVSHMCVVDFTGSRARAFFEYAIANNVGKLKTPGKALYSCLLNPQGGVIDDLIVYYFTEDFFRVVVNAGTADKDIAWFNQLNEQGGYGLTIAPRRDFAIVAVQGPNAREKVWATVPAARAATSELKPFNAAQVAGTPFGDLTVARTGYTGEDGFEVIVPAVHVEALWNALQQHGVRPCGLGARDTLRLEAGMNLYGQDMDDTVSPLDAGLAWTVDLSTPRAFVGREALERDGTRAAFVGLILQKENGKAGGVLRAHQKVVTPHGEGEITSGTFSPSMQESIAFARVPTAVQVGDTVHVQIRDKQLPARVVKLPFVRNGKVLAA</sequence>
<name>GCST_BURM1</name>
<reference key="1">
    <citation type="submission" date="2007-10" db="EMBL/GenBank/DDBJ databases">
        <title>Complete sequence of chromosome 1 of Burkholderia multivorans ATCC 17616.</title>
        <authorList>
            <person name="Copeland A."/>
            <person name="Lucas S."/>
            <person name="Lapidus A."/>
            <person name="Barry K."/>
            <person name="Glavina del Rio T."/>
            <person name="Dalin E."/>
            <person name="Tice H."/>
            <person name="Pitluck S."/>
            <person name="Chain P."/>
            <person name="Malfatti S."/>
            <person name="Shin M."/>
            <person name="Vergez L."/>
            <person name="Schmutz J."/>
            <person name="Larimer F."/>
            <person name="Land M."/>
            <person name="Hauser L."/>
            <person name="Kyrpides N."/>
            <person name="Kim E."/>
            <person name="Tiedje J."/>
            <person name="Richardson P."/>
        </authorList>
    </citation>
    <scope>NUCLEOTIDE SEQUENCE [LARGE SCALE GENOMIC DNA]</scope>
    <source>
        <strain>ATCC 17616 / 249</strain>
    </source>
</reference>
<reference key="2">
    <citation type="submission" date="2007-04" db="EMBL/GenBank/DDBJ databases">
        <title>Complete genome sequence of Burkholderia multivorans ATCC 17616.</title>
        <authorList>
            <person name="Ohtsubo Y."/>
            <person name="Yamashita A."/>
            <person name="Kurokawa K."/>
            <person name="Takami H."/>
            <person name="Yuhara S."/>
            <person name="Nishiyama E."/>
            <person name="Endo R."/>
            <person name="Miyazaki R."/>
            <person name="Ono A."/>
            <person name="Yano K."/>
            <person name="Ito M."/>
            <person name="Sota M."/>
            <person name="Yuji N."/>
            <person name="Hattori M."/>
            <person name="Tsuda M."/>
        </authorList>
    </citation>
    <scope>NUCLEOTIDE SEQUENCE [LARGE SCALE GENOMIC DNA]</scope>
    <source>
        <strain>ATCC 17616 / 249</strain>
    </source>
</reference>
<keyword id="KW-0032">Aminotransferase</keyword>
<keyword id="KW-1185">Reference proteome</keyword>
<keyword id="KW-0808">Transferase</keyword>
<protein>
    <recommendedName>
        <fullName evidence="1">Aminomethyltransferase</fullName>
        <ecNumber evidence="1">2.1.2.10</ecNumber>
    </recommendedName>
    <alternativeName>
        <fullName evidence="1">Glycine cleavage system T protein</fullName>
    </alternativeName>
</protein>
<accession>A9ACU5</accession>
<dbReference type="EC" id="2.1.2.10" evidence="1"/>
<dbReference type="EMBL" id="CP000868">
    <property type="protein sequence ID" value="ABX13838.1"/>
    <property type="molecule type" value="Genomic_DNA"/>
</dbReference>
<dbReference type="EMBL" id="AP009385">
    <property type="protein sequence ID" value="BAG44996.1"/>
    <property type="molecule type" value="Genomic_DNA"/>
</dbReference>
<dbReference type="RefSeq" id="WP_006415627.1">
    <property type="nucleotide sequence ID" value="NC_010084.1"/>
</dbReference>
<dbReference type="SMR" id="A9ACU5"/>
<dbReference type="STRING" id="395019.BMULJ_03122"/>
<dbReference type="KEGG" id="bmj:BMULJ_03122"/>
<dbReference type="KEGG" id="bmu:Bmul_0143"/>
<dbReference type="eggNOG" id="COG0404">
    <property type="taxonomic scope" value="Bacteria"/>
</dbReference>
<dbReference type="HOGENOM" id="CLU_007884_10_2_4"/>
<dbReference type="Proteomes" id="UP000008815">
    <property type="component" value="Chromosome 1"/>
</dbReference>
<dbReference type="GO" id="GO:0005829">
    <property type="term" value="C:cytosol"/>
    <property type="evidence" value="ECO:0007669"/>
    <property type="project" value="TreeGrafter"/>
</dbReference>
<dbReference type="GO" id="GO:0005960">
    <property type="term" value="C:glycine cleavage complex"/>
    <property type="evidence" value="ECO:0007669"/>
    <property type="project" value="InterPro"/>
</dbReference>
<dbReference type="GO" id="GO:0004047">
    <property type="term" value="F:aminomethyltransferase activity"/>
    <property type="evidence" value="ECO:0007669"/>
    <property type="project" value="UniProtKB-UniRule"/>
</dbReference>
<dbReference type="GO" id="GO:0008483">
    <property type="term" value="F:transaminase activity"/>
    <property type="evidence" value="ECO:0007669"/>
    <property type="project" value="UniProtKB-KW"/>
</dbReference>
<dbReference type="GO" id="GO:0019464">
    <property type="term" value="P:glycine decarboxylation via glycine cleavage system"/>
    <property type="evidence" value="ECO:0007669"/>
    <property type="project" value="UniProtKB-UniRule"/>
</dbReference>
<dbReference type="FunFam" id="3.30.70.1400:FF:000001">
    <property type="entry name" value="Aminomethyltransferase"/>
    <property type="match status" value="1"/>
</dbReference>
<dbReference type="FunFam" id="4.10.1250.10:FF:000001">
    <property type="entry name" value="Aminomethyltransferase"/>
    <property type="match status" value="1"/>
</dbReference>
<dbReference type="Gene3D" id="2.40.30.110">
    <property type="entry name" value="Aminomethyltransferase beta-barrel domains"/>
    <property type="match status" value="1"/>
</dbReference>
<dbReference type="Gene3D" id="3.30.70.1400">
    <property type="entry name" value="Aminomethyltransferase beta-barrel domains"/>
    <property type="match status" value="1"/>
</dbReference>
<dbReference type="Gene3D" id="4.10.1250.10">
    <property type="entry name" value="Aminomethyltransferase fragment"/>
    <property type="match status" value="1"/>
</dbReference>
<dbReference type="Gene3D" id="3.30.1360.120">
    <property type="entry name" value="Probable tRNA modification gtpase trme, domain 1"/>
    <property type="match status" value="1"/>
</dbReference>
<dbReference type="HAMAP" id="MF_00259">
    <property type="entry name" value="GcvT"/>
    <property type="match status" value="1"/>
</dbReference>
<dbReference type="InterPro" id="IPR006223">
    <property type="entry name" value="GCS_T"/>
</dbReference>
<dbReference type="InterPro" id="IPR022903">
    <property type="entry name" value="GCS_T_bac"/>
</dbReference>
<dbReference type="InterPro" id="IPR013977">
    <property type="entry name" value="GCST_C"/>
</dbReference>
<dbReference type="InterPro" id="IPR006222">
    <property type="entry name" value="GCV_T_N"/>
</dbReference>
<dbReference type="InterPro" id="IPR028896">
    <property type="entry name" value="GcvT/YgfZ/DmdA"/>
</dbReference>
<dbReference type="InterPro" id="IPR029043">
    <property type="entry name" value="GcvT/YgfZ_C"/>
</dbReference>
<dbReference type="InterPro" id="IPR027266">
    <property type="entry name" value="TrmE/GcvT_dom1"/>
</dbReference>
<dbReference type="NCBIfam" id="TIGR00528">
    <property type="entry name" value="gcvT"/>
    <property type="match status" value="1"/>
</dbReference>
<dbReference type="NCBIfam" id="NF001567">
    <property type="entry name" value="PRK00389.1"/>
    <property type="match status" value="1"/>
</dbReference>
<dbReference type="PANTHER" id="PTHR43757">
    <property type="entry name" value="AMINOMETHYLTRANSFERASE"/>
    <property type="match status" value="1"/>
</dbReference>
<dbReference type="PANTHER" id="PTHR43757:SF2">
    <property type="entry name" value="AMINOMETHYLTRANSFERASE, MITOCHONDRIAL"/>
    <property type="match status" value="1"/>
</dbReference>
<dbReference type="Pfam" id="PF01571">
    <property type="entry name" value="GCV_T"/>
    <property type="match status" value="1"/>
</dbReference>
<dbReference type="Pfam" id="PF08669">
    <property type="entry name" value="GCV_T_C"/>
    <property type="match status" value="1"/>
</dbReference>
<dbReference type="PIRSF" id="PIRSF006487">
    <property type="entry name" value="GcvT"/>
    <property type="match status" value="1"/>
</dbReference>
<dbReference type="SUPFAM" id="SSF101790">
    <property type="entry name" value="Aminomethyltransferase beta-barrel domain"/>
    <property type="match status" value="1"/>
</dbReference>
<dbReference type="SUPFAM" id="SSF103025">
    <property type="entry name" value="Folate-binding domain"/>
    <property type="match status" value="1"/>
</dbReference>
<organism>
    <name type="scientific">Burkholderia multivorans (strain ATCC 17616 / 249)</name>
    <dbReference type="NCBI Taxonomy" id="395019"/>
    <lineage>
        <taxon>Bacteria</taxon>
        <taxon>Pseudomonadati</taxon>
        <taxon>Pseudomonadota</taxon>
        <taxon>Betaproteobacteria</taxon>
        <taxon>Burkholderiales</taxon>
        <taxon>Burkholderiaceae</taxon>
        <taxon>Burkholderia</taxon>
        <taxon>Burkholderia cepacia complex</taxon>
    </lineage>
</organism>
<proteinExistence type="inferred from homology"/>
<evidence type="ECO:0000255" key="1">
    <source>
        <dbReference type="HAMAP-Rule" id="MF_00259"/>
    </source>
</evidence>